<comment type="function">
    <text evidence="2">Catalytic subunit of the oligosaccharyl transferase (OST) complex that catalyzes the initial transfer of a defined glycan (Glc(3)Man(9)GlcNAc(2) in eukaryotes) from the lipid carrier dolichol-pyrophosphate to an asparagine residue within an Asn-X-Ser/Thr consensus motif in nascent polypeptide chains, the first step in protein N-glycosylation. N-glycosylation occurs cotranslationally and the complex associates with the Sec61 complex at the channel-forming translocon complex that mediates protein translocation across the endoplasmic reticulum (ER). All subunits are required for a maximal enzyme activity. This subunit contains the active site and the acceptor peptide and donor lipid-linked oligosaccharide (LLO) binding pockets.</text>
</comment>
<comment type="catalytic activity">
    <reaction evidence="2">
        <text>a di-trans,poly-cis-dolichyl diphosphooligosaccharide + L-asparaginyl-[protein] = N(4)-(oligosaccharide-(1-&gt;4)-N-acetyl-beta-D-glucosaminyl-(1-&gt;4)-N-acetyl-beta-D-glucosaminyl)-L-asparaginyl-[protein] + a di-trans,poly-cis-dolichyl diphosphate + H(+)</text>
        <dbReference type="Rhea" id="RHEA:22980"/>
        <dbReference type="Rhea" id="RHEA-COMP:12804"/>
        <dbReference type="Rhea" id="RHEA-COMP:12805"/>
        <dbReference type="Rhea" id="RHEA-COMP:19506"/>
        <dbReference type="Rhea" id="RHEA-COMP:19509"/>
        <dbReference type="ChEBI" id="CHEBI:15378"/>
        <dbReference type="ChEBI" id="CHEBI:50347"/>
        <dbReference type="ChEBI" id="CHEBI:57497"/>
        <dbReference type="ChEBI" id="CHEBI:57570"/>
        <dbReference type="ChEBI" id="CHEBI:132529"/>
        <dbReference type="EC" id="2.4.99.18"/>
    </reaction>
</comment>
<comment type="cofactor">
    <cofactor evidence="1">
        <name>Mg(2+)</name>
        <dbReference type="ChEBI" id="CHEBI:18420"/>
    </cofactor>
    <cofactor evidence="1">
        <name>Mn(2+)</name>
        <dbReference type="ChEBI" id="CHEBI:29035"/>
    </cofactor>
</comment>
<comment type="pathway">
    <text evidence="2">Protein modification; protein glycosylation.</text>
</comment>
<comment type="subunit">
    <text evidence="2">Component of the oligosaccharyltransferase (OST) complex.</text>
</comment>
<comment type="subcellular location">
    <subcellularLocation>
        <location evidence="3">Endoplasmic reticulum membrane</location>
        <topology evidence="2">Multi-pass membrane protein</topology>
    </subcellularLocation>
</comment>
<comment type="domain">
    <text evidence="2">Despite low primary sequence conservation between eukaryotic catalytic subunits and bacterial and archaeal single subunit OSTs (ssOST), structural comparison revealed several common motifs at spatially equivalent positions, like the DXD motif 1 on the external loop 1 and the DXD motif 2 on the external loop 2 involved in binding of the metal ion cofactor and the carboxamide group of the acceptor asparagine, the conserved Glu residue of the TIXE/SVSE motif on the external loop 5 involved in catalysis, as well as the WWDYG and the DK/MI motifs in the globular domain that define the binding pocket for the +2 Ser/Thr of the acceptor sequon. In bacterial ssOSTs, an Arg residue was found to interact with a negatively charged side chain at the -2 position of the sequon. This Arg is conserved in bacterial enzymes and correlates with an extended sequon requirement (Asp-X-Asn-X-Ser/Thr) for bacterial N-glycosylation.</text>
</comment>
<comment type="similarity">
    <text evidence="7">Belongs to the STT3 family.</text>
</comment>
<evidence type="ECO:0000250" key="1">
    <source>
        <dbReference type="UniProtKB" id="B9KDD4"/>
    </source>
</evidence>
<evidence type="ECO:0000250" key="2">
    <source>
        <dbReference type="UniProtKB" id="P39007"/>
    </source>
</evidence>
<evidence type="ECO:0000250" key="3">
    <source>
        <dbReference type="UniProtKB" id="P46978"/>
    </source>
</evidence>
<evidence type="ECO:0000250" key="4">
    <source>
        <dbReference type="UniProtKB" id="Q5HTX9"/>
    </source>
</evidence>
<evidence type="ECO:0000255" key="5"/>
<evidence type="ECO:0000255" key="6">
    <source>
        <dbReference type="PROSITE-ProRule" id="PRU00498"/>
    </source>
</evidence>
<evidence type="ECO:0000305" key="7"/>
<sequence>MANSATITSKKGVKSHQKDWKIPLKVLILICIAVASVSSRLFSVIRYESIIHEFDPWFNFRASKILVEQGFYNFLNWFDERSWYPLGRVAGGTLYPGLMVTSGIIFKVLHLLRINVNIRDVCVLLAPAFSGITAIATYYLARELKSDACGLLAAAFMGIAPGYTSRSVAGSYDNEAIAITLLMSTFALWIKAVKSGSSFWGACTGLLYFYMVTAWGGYVFITNMIPLHVFVLLLMGRYTSKLYIAYTTYYVIGTLASMQVPFVGFQPVSTSEHMSALGVFGLLQLFAFYNYVKGLVSSKQFQILIRFALVCLVGLATVVLFALSSTGVIAPWTGRFYSLWDTNYAKIHIPIIASVSEHQPPTWSSLFFDLQFLIWLLPVGVYLCFKELRNEHVFIIIYSVLGTYFCGVMVRLVLTLTPCVCIAAAVAISTLLDTYMGPEVEEDKVSEEAASAKSKNKKGIFSILSFFTSGSKNIGIYSLLSRVLVISSTAYFLIMFVYHSSWVTSNAYSSPTVVLSTVLNDGSLMYIDDFREAYDWLRRNTPYDTKVMSWWDYGYQIAGMADRITLVDNNTWNNTHIATVGKAMSSPEEKAYPILRKHDVDYILIIYGGTLGYSSDDMNKFLWMIRISQGLWPDEIVERNFFTPNGEYRTDDAATPTMRESLLYKMSYHGAWKLFPPNQGYDRARNQKLPSKDPQLFTIEEAFTTVHHLVRLYKVKKPDTLGRDLKQVTLFEEGKRKKLRRPAKTNEIPLRV</sequence>
<dbReference type="EC" id="2.4.99.18"/>
<dbReference type="EMBL" id="AB015232">
    <property type="protein sequence ID" value="BAA76479.1"/>
    <property type="molecule type" value="Genomic_DNA"/>
</dbReference>
<dbReference type="EMBL" id="CU329671">
    <property type="protein sequence ID" value="CAA22192.1"/>
    <property type="molecule type" value="Genomic_DNA"/>
</dbReference>
<dbReference type="PIR" id="T39338">
    <property type="entry name" value="T39338"/>
</dbReference>
<dbReference type="PIR" id="T43370">
    <property type="entry name" value="T43370"/>
</dbReference>
<dbReference type="RefSeq" id="NP_595148.1">
    <property type="nucleotide sequence ID" value="NM_001021056.2"/>
</dbReference>
<dbReference type="SMR" id="O94335"/>
<dbReference type="BioGRID" id="276723">
    <property type="interactions" value="2"/>
</dbReference>
<dbReference type="ComplexPortal" id="CPX-10061">
    <property type="entry name" value="Oligosaccharyltransferase complex"/>
</dbReference>
<dbReference type="FunCoup" id="O94335">
    <property type="interactions" value="771"/>
</dbReference>
<dbReference type="STRING" id="284812.O94335"/>
<dbReference type="CAZy" id="GT66">
    <property type="family name" value="Glycosyltransferase Family 66"/>
</dbReference>
<dbReference type="GlyCosmos" id="O94335">
    <property type="glycosylation" value="2 sites, No reported glycans"/>
</dbReference>
<dbReference type="iPTMnet" id="O94335"/>
<dbReference type="PaxDb" id="4896-SPBC1271.02.1"/>
<dbReference type="EnsemblFungi" id="SPBC1271.02.1">
    <property type="protein sequence ID" value="SPBC1271.02.1:pep"/>
    <property type="gene ID" value="SPBC1271.02"/>
</dbReference>
<dbReference type="GeneID" id="2540190"/>
<dbReference type="KEGG" id="spo:2540190"/>
<dbReference type="PomBase" id="SPBC1271.02">
    <property type="gene designation" value="stt3"/>
</dbReference>
<dbReference type="VEuPathDB" id="FungiDB:SPBC1271.02"/>
<dbReference type="eggNOG" id="KOG2292">
    <property type="taxonomic scope" value="Eukaryota"/>
</dbReference>
<dbReference type="HOGENOM" id="CLU_009279_1_0_1"/>
<dbReference type="InParanoid" id="O94335"/>
<dbReference type="OMA" id="TWYAIGT"/>
<dbReference type="PhylomeDB" id="O94335"/>
<dbReference type="UniPathway" id="UPA00378"/>
<dbReference type="PRO" id="PR:O94335"/>
<dbReference type="Proteomes" id="UP000002485">
    <property type="component" value="Chromosome II"/>
</dbReference>
<dbReference type="GO" id="GO:0005783">
    <property type="term" value="C:endoplasmic reticulum"/>
    <property type="evidence" value="ECO:0007005"/>
    <property type="project" value="PomBase"/>
</dbReference>
<dbReference type="GO" id="GO:0008250">
    <property type="term" value="C:oligosaccharyltransferase complex"/>
    <property type="evidence" value="ECO:0000316"/>
    <property type="project" value="PomBase"/>
</dbReference>
<dbReference type="GO" id="GO:0004579">
    <property type="term" value="F:dolichyl-diphosphooligosaccharide-protein glycotransferase activity"/>
    <property type="evidence" value="ECO:0000316"/>
    <property type="project" value="PomBase"/>
</dbReference>
<dbReference type="GO" id="GO:0046872">
    <property type="term" value="F:metal ion binding"/>
    <property type="evidence" value="ECO:0007669"/>
    <property type="project" value="UniProtKB-KW"/>
</dbReference>
<dbReference type="GO" id="GO:0043687">
    <property type="term" value="P:post-translational protein modification"/>
    <property type="evidence" value="ECO:0000318"/>
    <property type="project" value="GO_Central"/>
</dbReference>
<dbReference type="GO" id="GO:0018279">
    <property type="term" value="P:protein N-linked glycosylation via asparagine"/>
    <property type="evidence" value="ECO:0000318"/>
    <property type="project" value="GO_Central"/>
</dbReference>
<dbReference type="FunFam" id="3.40.50.12610:FF:000001">
    <property type="entry name" value="Dolichyl-diphosphooligosaccharide--protein glycosyltransferase subunit STT3B"/>
    <property type="match status" value="1"/>
</dbReference>
<dbReference type="Gene3D" id="3.40.50.12610">
    <property type="match status" value="1"/>
</dbReference>
<dbReference type="InterPro" id="IPR003674">
    <property type="entry name" value="Oligo_trans_STT3"/>
</dbReference>
<dbReference type="InterPro" id="IPR048999">
    <property type="entry name" value="STT3-PglB_core"/>
</dbReference>
<dbReference type="InterPro" id="IPR048307">
    <property type="entry name" value="STT3_N"/>
</dbReference>
<dbReference type="PANTHER" id="PTHR13872">
    <property type="entry name" value="DOLICHYL-DIPHOSPHOOLIGOSACCHARIDE--PROTEIN GLYCOSYLTRANSFERASE SUBUNIT"/>
    <property type="match status" value="1"/>
</dbReference>
<dbReference type="PANTHER" id="PTHR13872:SF1">
    <property type="entry name" value="DOLICHYL-DIPHOSPHOOLIGOSACCHARIDE--PROTEIN GLYCOSYLTRANSFERASE SUBUNIT STT3B"/>
    <property type="match status" value="1"/>
</dbReference>
<dbReference type="Pfam" id="PF02516">
    <property type="entry name" value="STT3"/>
    <property type="match status" value="1"/>
</dbReference>
<dbReference type="Pfam" id="PF21436">
    <property type="entry name" value="STT3-PglB_core"/>
    <property type="match status" value="1"/>
</dbReference>
<organism>
    <name type="scientific">Schizosaccharomyces pombe (strain 972 / ATCC 24843)</name>
    <name type="common">Fission yeast</name>
    <dbReference type="NCBI Taxonomy" id="284812"/>
    <lineage>
        <taxon>Eukaryota</taxon>
        <taxon>Fungi</taxon>
        <taxon>Dikarya</taxon>
        <taxon>Ascomycota</taxon>
        <taxon>Taphrinomycotina</taxon>
        <taxon>Schizosaccharomycetes</taxon>
        <taxon>Schizosaccharomycetales</taxon>
        <taxon>Schizosaccharomycetaceae</taxon>
        <taxon>Schizosaccharomyces</taxon>
    </lineage>
</organism>
<gene>
    <name type="primary">stt3</name>
    <name type="ORF">SPBC1271.02</name>
</gene>
<proteinExistence type="inferred from homology"/>
<name>STT3_SCHPO</name>
<keyword id="KW-0256">Endoplasmic reticulum</keyword>
<keyword id="KW-0325">Glycoprotein</keyword>
<keyword id="KW-0328">Glycosyltransferase</keyword>
<keyword id="KW-0460">Magnesium</keyword>
<keyword id="KW-0464">Manganese</keyword>
<keyword id="KW-0472">Membrane</keyword>
<keyword id="KW-0479">Metal-binding</keyword>
<keyword id="KW-1185">Reference proteome</keyword>
<keyword id="KW-0808">Transferase</keyword>
<keyword id="KW-0812">Transmembrane</keyword>
<keyword id="KW-1133">Transmembrane helix</keyword>
<reference key="1">
    <citation type="journal article" date="1999" name="Yeast">
        <title>Schizosaccharomyces pombe stt3+ is a functional homologue of Saccharomyces cerevisiae STT3 which regulates oligosaccharyltransferase activity.</title>
        <authorList>
            <person name="Yoshida S."/>
            <person name="Matsuura A."/>
            <person name="Merregaert J."/>
            <person name="Anraku Y."/>
        </authorList>
    </citation>
    <scope>NUCLEOTIDE SEQUENCE [GENOMIC DNA]</scope>
</reference>
<reference key="2">
    <citation type="journal article" date="2002" name="Nature">
        <title>The genome sequence of Schizosaccharomyces pombe.</title>
        <authorList>
            <person name="Wood V."/>
            <person name="Gwilliam R."/>
            <person name="Rajandream M.A."/>
            <person name="Lyne M.H."/>
            <person name="Lyne R."/>
            <person name="Stewart A."/>
            <person name="Sgouros J.G."/>
            <person name="Peat N."/>
            <person name="Hayles J."/>
            <person name="Baker S.G."/>
            <person name="Basham D."/>
            <person name="Bowman S."/>
            <person name="Brooks K."/>
            <person name="Brown D."/>
            <person name="Brown S."/>
            <person name="Chillingworth T."/>
            <person name="Churcher C.M."/>
            <person name="Collins M."/>
            <person name="Connor R."/>
            <person name="Cronin A."/>
            <person name="Davis P."/>
            <person name="Feltwell T."/>
            <person name="Fraser A."/>
            <person name="Gentles S."/>
            <person name="Goble A."/>
            <person name="Hamlin N."/>
            <person name="Harris D.E."/>
            <person name="Hidalgo J."/>
            <person name="Hodgson G."/>
            <person name="Holroyd S."/>
            <person name="Hornsby T."/>
            <person name="Howarth S."/>
            <person name="Huckle E.J."/>
            <person name="Hunt S."/>
            <person name="Jagels K."/>
            <person name="James K.D."/>
            <person name="Jones L."/>
            <person name="Jones M."/>
            <person name="Leather S."/>
            <person name="McDonald S."/>
            <person name="McLean J."/>
            <person name="Mooney P."/>
            <person name="Moule S."/>
            <person name="Mungall K.L."/>
            <person name="Murphy L.D."/>
            <person name="Niblett D."/>
            <person name="Odell C."/>
            <person name="Oliver K."/>
            <person name="O'Neil S."/>
            <person name="Pearson D."/>
            <person name="Quail M.A."/>
            <person name="Rabbinowitsch E."/>
            <person name="Rutherford K.M."/>
            <person name="Rutter S."/>
            <person name="Saunders D."/>
            <person name="Seeger K."/>
            <person name="Sharp S."/>
            <person name="Skelton J."/>
            <person name="Simmonds M.N."/>
            <person name="Squares R."/>
            <person name="Squares S."/>
            <person name="Stevens K."/>
            <person name="Taylor K."/>
            <person name="Taylor R.G."/>
            <person name="Tivey A."/>
            <person name="Walsh S.V."/>
            <person name="Warren T."/>
            <person name="Whitehead S."/>
            <person name="Woodward J.R."/>
            <person name="Volckaert G."/>
            <person name="Aert R."/>
            <person name="Robben J."/>
            <person name="Grymonprez B."/>
            <person name="Weltjens I."/>
            <person name="Vanstreels E."/>
            <person name="Rieger M."/>
            <person name="Schaefer M."/>
            <person name="Mueller-Auer S."/>
            <person name="Gabel C."/>
            <person name="Fuchs M."/>
            <person name="Duesterhoeft A."/>
            <person name="Fritzc C."/>
            <person name="Holzer E."/>
            <person name="Moestl D."/>
            <person name="Hilbert H."/>
            <person name="Borzym K."/>
            <person name="Langer I."/>
            <person name="Beck A."/>
            <person name="Lehrach H."/>
            <person name="Reinhardt R."/>
            <person name="Pohl T.M."/>
            <person name="Eger P."/>
            <person name="Zimmermann W."/>
            <person name="Wedler H."/>
            <person name="Wambutt R."/>
            <person name="Purnelle B."/>
            <person name="Goffeau A."/>
            <person name="Cadieu E."/>
            <person name="Dreano S."/>
            <person name="Gloux S."/>
            <person name="Lelaure V."/>
            <person name="Mottier S."/>
            <person name="Galibert F."/>
            <person name="Aves S.J."/>
            <person name="Xiang Z."/>
            <person name="Hunt C."/>
            <person name="Moore K."/>
            <person name="Hurst S.M."/>
            <person name="Lucas M."/>
            <person name="Rochet M."/>
            <person name="Gaillardin C."/>
            <person name="Tallada V.A."/>
            <person name="Garzon A."/>
            <person name="Thode G."/>
            <person name="Daga R.R."/>
            <person name="Cruzado L."/>
            <person name="Jimenez J."/>
            <person name="Sanchez M."/>
            <person name="del Rey F."/>
            <person name="Benito J."/>
            <person name="Dominguez A."/>
            <person name="Revuelta J.L."/>
            <person name="Moreno S."/>
            <person name="Armstrong J."/>
            <person name="Forsburg S.L."/>
            <person name="Cerutti L."/>
            <person name="Lowe T."/>
            <person name="McCombie W.R."/>
            <person name="Paulsen I."/>
            <person name="Potashkin J."/>
            <person name="Shpakovski G.V."/>
            <person name="Ussery D."/>
            <person name="Barrell B.G."/>
            <person name="Nurse P."/>
        </authorList>
    </citation>
    <scope>NUCLEOTIDE SEQUENCE [LARGE SCALE GENOMIC DNA]</scope>
    <source>
        <strain>972 / ATCC 24843</strain>
    </source>
</reference>
<accession>O94335</accession>
<accession>Q8WZK7</accession>
<protein>
    <recommendedName>
        <fullName>Dolichyl-diphosphooligosaccharide--protein glycosyltransferase subunit stt3</fullName>
        <shortName>Oligosaccharyl transferase subunit stt3</shortName>
        <ecNumber>2.4.99.18</ecNumber>
    </recommendedName>
</protein>
<feature type="chain" id="PRO_0000072292" description="Dolichyl-diphosphooligosaccharide--protein glycosyltransferase subunit stt3">
    <location>
        <begin position="1"/>
        <end position="752"/>
    </location>
</feature>
<feature type="topological domain" description="Cytoplasmic" evidence="7">
    <location>
        <begin position="1"/>
        <end position="21"/>
    </location>
</feature>
<feature type="transmembrane region" description="Helical" evidence="5">
    <location>
        <begin position="22"/>
        <end position="42"/>
    </location>
</feature>
<feature type="topological domain" description="Lumenal" evidence="7">
    <location>
        <begin position="43"/>
        <end position="125"/>
    </location>
</feature>
<feature type="transmembrane region" description="Helical" evidence="2">
    <location>
        <begin position="126"/>
        <end position="144"/>
    </location>
</feature>
<feature type="topological domain" description="Cytoplasmic" evidence="7">
    <location>
        <begin position="145"/>
        <end position="146"/>
    </location>
</feature>
<feature type="transmembrane region" description="Helical" evidence="2">
    <location>
        <begin position="147"/>
        <end position="164"/>
    </location>
</feature>
<feature type="topological domain" description="Lumenal" evidence="7">
    <location>
        <begin position="165"/>
        <end position="175"/>
    </location>
</feature>
<feature type="transmembrane region" description="Helical" evidence="2">
    <location>
        <begin position="176"/>
        <end position="195"/>
    </location>
</feature>
<feature type="topological domain" description="Cytoplasmic" evidence="7">
    <location>
        <begin position="196"/>
        <end position="197"/>
    </location>
</feature>
<feature type="transmembrane region" description="Helical" evidence="2">
    <location>
        <begin position="198"/>
        <end position="212"/>
    </location>
</feature>
<feature type="topological domain" description="Lumenal" evidence="7">
    <location>
        <begin position="213"/>
        <end position="217"/>
    </location>
</feature>
<feature type="transmembrane region" description="Helical" evidence="2">
    <location>
        <begin position="218"/>
        <end position="234"/>
    </location>
</feature>
<feature type="topological domain" description="Cytoplasmic" evidence="7">
    <location>
        <begin position="235"/>
        <end position="239"/>
    </location>
</feature>
<feature type="transmembrane region" description="Helical" evidence="2">
    <location>
        <begin position="240"/>
        <end position="265"/>
    </location>
</feature>
<feature type="topological domain" description="Lumenal" evidence="7">
    <location>
        <begin position="266"/>
        <end position="273"/>
    </location>
</feature>
<feature type="transmembrane region" description="Helical" evidence="2">
    <location>
        <begin position="274"/>
        <end position="293"/>
    </location>
</feature>
<feature type="topological domain" description="Cytoplasmic" evidence="7">
    <location>
        <begin position="294"/>
        <end position="302"/>
    </location>
</feature>
<feature type="transmembrane region" description="Helical" evidence="5">
    <location>
        <begin position="303"/>
        <end position="323"/>
    </location>
</feature>
<feature type="topological domain" description="Lumenal" evidence="7">
    <location>
        <begin position="324"/>
        <end position="362"/>
    </location>
</feature>
<feature type="transmembrane region" description="Helical" evidence="2">
    <location>
        <begin position="363"/>
        <end position="385"/>
    </location>
</feature>
<feature type="topological domain" description="Cytoplasmic" evidence="7">
    <location>
        <begin position="386"/>
        <end position="391"/>
    </location>
</feature>
<feature type="transmembrane region" description="Helical" evidence="2">
    <location>
        <begin position="392"/>
        <end position="408"/>
    </location>
</feature>
<feature type="topological domain" description="Lumenal" evidence="7">
    <location>
        <begin position="409"/>
        <end position="412"/>
    </location>
</feature>
<feature type="transmembrane region" description="Helical" evidence="2">
    <location>
        <begin position="413"/>
        <end position="434"/>
    </location>
</feature>
<feature type="topological domain" description="Cytoplasmic" evidence="7">
    <location>
        <begin position="435"/>
        <end position="482"/>
    </location>
</feature>
<feature type="transmembrane region" description="Helical" evidence="5">
    <location>
        <begin position="483"/>
        <end position="503"/>
    </location>
</feature>
<feature type="topological domain" description="Lumenal" evidence="7">
    <location>
        <begin position="504"/>
        <end position="752"/>
    </location>
</feature>
<feature type="region of interest" description="Interacts with target acceptor peptide in protein substrate" evidence="1">
    <location>
        <begin position="550"/>
        <end position="552"/>
    </location>
</feature>
<feature type="short sequence motif" description="DXD motif 1" evidence="4">
    <location>
        <begin position="53"/>
        <end position="55"/>
    </location>
</feature>
<feature type="short sequence motif" description="DXD motif 2" evidence="2">
    <location>
        <begin position="173"/>
        <end position="175"/>
    </location>
</feature>
<feature type="short sequence motif" description="SVSE motif" evidence="4">
    <location>
        <begin position="354"/>
        <end position="357"/>
    </location>
</feature>
<feature type="short sequence motif" description="WWDYG motif" evidence="2">
    <location>
        <begin position="550"/>
        <end position="554"/>
    </location>
</feature>
<feature type="short sequence motif" description="DK motif" evidence="2">
    <location>
        <begin position="617"/>
        <end position="624"/>
    </location>
</feature>
<feature type="binding site" evidence="1">
    <location>
        <position position="55"/>
    </location>
    <ligand>
        <name>Mn(2+)</name>
        <dbReference type="ChEBI" id="CHEBI:29035"/>
    </ligand>
</feature>
<feature type="binding site" evidence="1">
    <location>
        <position position="173"/>
    </location>
    <ligand>
        <name>Mn(2+)</name>
        <dbReference type="ChEBI" id="CHEBI:29035"/>
    </ligand>
</feature>
<feature type="binding site" evidence="1">
    <location>
        <position position="175"/>
    </location>
    <ligand>
        <name>Mn(2+)</name>
        <dbReference type="ChEBI" id="CHEBI:29035"/>
    </ligand>
</feature>
<feature type="binding site" evidence="1">
    <location>
        <position position="411"/>
    </location>
    <ligand>
        <name>dolichyl diphosphooligosaccharide</name>
        <dbReference type="ChEBI" id="CHEBI:57570"/>
    </ligand>
</feature>
<feature type="binding site" evidence="1">
    <location>
        <position position="555"/>
    </location>
    <ligand>
        <name>dolichyl diphosphooligosaccharide</name>
        <dbReference type="ChEBI" id="CHEBI:57570"/>
    </ligand>
</feature>
<feature type="site" description="Interacts with target acceptor peptide in protein substrate" evidence="1">
    <location>
        <position position="55"/>
    </location>
</feature>
<feature type="site" description="Important for catalytic activity" evidence="1">
    <location>
        <position position="166"/>
    </location>
</feature>
<feature type="site" description="Interacts with target acceptor peptide in protein substrate" evidence="1">
    <location>
        <position position="357"/>
    </location>
</feature>
<feature type="site" description="Interacts with target acceptor peptide in protein substrate" evidence="1">
    <location>
        <position position="620"/>
    </location>
</feature>
<feature type="glycosylation site" description="N-linked (GlcNAc...) asparagine" evidence="6">
    <location>
        <position position="569"/>
    </location>
</feature>
<feature type="glycosylation site" description="N-linked (GlcNAc...) (high mannose) asparagine" evidence="2">
    <location>
        <position position="573"/>
    </location>
</feature>
<feature type="sequence conflict" description="In Ref. 1; BAA76479." evidence="7" ref="1">
    <original>S</original>
    <variation>P</variation>
    <location>
        <position position="399"/>
    </location>
</feature>
<feature type="sequence conflict" description="In Ref. 1; BAA76479." evidence="7" ref="1">
    <original>F</original>
    <variation>S</variation>
    <location>
        <position position="461"/>
    </location>
</feature>
<feature type="sequence conflict" description="In Ref. 1; BAA76479." evidence="7" ref="1">
    <original>LRRPAKTNEIPLRV</original>
    <variation>SAVLQKLTKFL</variation>
    <location>
        <begin position="739"/>
        <end position="752"/>
    </location>
</feature>